<feature type="chain" id="PRO_0000178448" description="Large ribosomal subunit protein bL28">
    <location>
        <begin position="1"/>
        <end position="77"/>
    </location>
</feature>
<feature type="region of interest" description="Disordered" evidence="2">
    <location>
        <begin position="1"/>
        <end position="25"/>
    </location>
</feature>
<sequence length="77" mass="8761">MARVCQVTGKAPMSGNNVSHANNKTKRRFLPNLQNRRFWVESENRWVRLRVSNAGLRLIDKNGIDSVLADLRARGEA</sequence>
<accession>Q63WH3</accession>
<gene>
    <name evidence="1" type="primary">rpmB</name>
    <name type="ordered locus">BPSL0916</name>
</gene>
<dbReference type="EMBL" id="BX571965">
    <property type="protein sequence ID" value="CAH34910.1"/>
    <property type="molecule type" value="Genomic_DNA"/>
</dbReference>
<dbReference type="RefSeq" id="WP_004186391.1">
    <property type="nucleotide sequence ID" value="NZ_CP009538.1"/>
</dbReference>
<dbReference type="RefSeq" id="YP_107543.1">
    <property type="nucleotide sequence ID" value="NC_006350.1"/>
</dbReference>
<dbReference type="SMR" id="Q63WH3"/>
<dbReference type="STRING" id="272560.BPSL0916"/>
<dbReference type="GeneID" id="98107656"/>
<dbReference type="KEGG" id="bps:BPSL0916"/>
<dbReference type="PATRIC" id="fig|272560.51.peg.666"/>
<dbReference type="eggNOG" id="COG0227">
    <property type="taxonomic scope" value="Bacteria"/>
</dbReference>
<dbReference type="PRO" id="PR:Q63WH3"/>
<dbReference type="Proteomes" id="UP000000605">
    <property type="component" value="Chromosome 1"/>
</dbReference>
<dbReference type="GO" id="GO:0022625">
    <property type="term" value="C:cytosolic large ribosomal subunit"/>
    <property type="evidence" value="ECO:0007669"/>
    <property type="project" value="TreeGrafter"/>
</dbReference>
<dbReference type="GO" id="GO:0003735">
    <property type="term" value="F:structural constituent of ribosome"/>
    <property type="evidence" value="ECO:0007669"/>
    <property type="project" value="InterPro"/>
</dbReference>
<dbReference type="GO" id="GO:0006412">
    <property type="term" value="P:translation"/>
    <property type="evidence" value="ECO:0007669"/>
    <property type="project" value="UniProtKB-UniRule"/>
</dbReference>
<dbReference type="FunFam" id="2.30.170.40:FF:000001">
    <property type="entry name" value="50S ribosomal protein L28"/>
    <property type="match status" value="1"/>
</dbReference>
<dbReference type="Gene3D" id="2.30.170.40">
    <property type="entry name" value="Ribosomal protein L28/L24"/>
    <property type="match status" value="1"/>
</dbReference>
<dbReference type="HAMAP" id="MF_00373">
    <property type="entry name" value="Ribosomal_bL28"/>
    <property type="match status" value="1"/>
</dbReference>
<dbReference type="InterPro" id="IPR026569">
    <property type="entry name" value="Ribosomal_bL28"/>
</dbReference>
<dbReference type="InterPro" id="IPR034704">
    <property type="entry name" value="Ribosomal_bL28/bL31-like_sf"/>
</dbReference>
<dbReference type="InterPro" id="IPR001383">
    <property type="entry name" value="Ribosomal_bL28_bact-type"/>
</dbReference>
<dbReference type="InterPro" id="IPR037147">
    <property type="entry name" value="Ribosomal_bL28_sf"/>
</dbReference>
<dbReference type="NCBIfam" id="TIGR00009">
    <property type="entry name" value="L28"/>
    <property type="match status" value="1"/>
</dbReference>
<dbReference type="PANTHER" id="PTHR13528">
    <property type="entry name" value="39S RIBOSOMAL PROTEIN L28, MITOCHONDRIAL"/>
    <property type="match status" value="1"/>
</dbReference>
<dbReference type="PANTHER" id="PTHR13528:SF2">
    <property type="entry name" value="LARGE RIBOSOMAL SUBUNIT PROTEIN BL28M"/>
    <property type="match status" value="1"/>
</dbReference>
<dbReference type="Pfam" id="PF00830">
    <property type="entry name" value="Ribosomal_L28"/>
    <property type="match status" value="1"/>
</dbReference>
<dbReference type="SUPFAM" id="SSF143800">
    <property type="entry name" value="L28p-like"/>
    <property type="match status" value="1"/>
</dbReference>
<name>RL28_BURPS</name>
<keyword id="KW-1185">Reference proteome</keyword>
<keyword id="KW-0687">Ribonucleoprotein</keyword>
<keyword id="KW-0689">Ribosomal protein</keyword>
<protein>
    <recommendedName>
        <fullName evidence="1">Large ribosomal subunit protein bL28</fullName>
    </recommendedName>
    <alternativeName>
        <fullName evidence="3">50S ribosomal protein L28</fullName>
    </alternativeName>
</protein>
<organism>
    <name type="scientific">Burkholderia pseudomallei (strain K96243)</name>
    <dbReference type="NCBI Taxonomy" id="272560"/>
    <lineage>
        <taxon>Bacteria</taxon>
        <taxon>Pseudomonadati</taxon>
        <taxon>Pseudomonadota</taxon>
        <taxon>Betaproteobacteria</taxon>
        <taxon>Burkholderiales</taxon>
        <taxon>Burkholderiaceae</taxon>
        <taxon>Burkholderia</taxon>
        <taxon>pseudomallei group</taxon>
    </lineage>
</organism>
<proteinExistence type="inferred from homology"/>
<comment type="similarity">
    <text evidence="1">Belongs to the bacterial ribosomal protein bL28 family.</text>
</comment>
<evidence type="ECO:0000255" key="1">
    <source>
        <dbReference type="HAMAP-Rule" id="MF_00373"/>
    </source>
</evidence>
<evidence type="ECO:0000256" key="2">
    <source>
        <dbReference type="SAM" id="MobiDB-lite"/>
    </source>
</evidence>
<evidence type="ECO:0000305" key="3"/>
<reference key="1">
    <citation type="journal article" date="2004" name="Proc. Natl. Acad. Sci. U.S.A.">
        <title>Genomic plasticity of the causative agent of melioidosis, Burkholderia pseudomallei.</title>
        <authorList>
            <person name="Holden M.T.G."/>
            <person name="Titball R.W."/>
            <person name="Peacock S.J."/>
            <person name="Cerdeno-Tarraga A.-M."/>
            <person name="Atkins T."/>
            <person name="Crossman L.C."/>
            <person name="Pitt T."/>
            <person name="Churcher C."/>
            <person name="Mungall K.L."/>
            <person name="Bentley S.D."/>
            <person name="Sebaihia M."/>
            <person name="Thomson N.R."/>
            <person name="Bason N."/>
            <person name="Beacham I.R."/>
            <person name="Brooks K."/>
            <person name="Brown K.A."/>
            <person name="Brown N.F."/>
            <person name="Challis G.L."/>
            <person name="Cherevach I."/>
            <person name="Chillingworth T."/>
            <person name="Cronin A."/>
            <person name="Crossett B."/>
            <person name="Davis P."/>
            <person name="DeShazer D."/>
            <person name="Feltwell T."/>
            <person name="Fraser A."/>
            <person name="Hance Z."/>
            <person name="Hauser H."/>
            <person name="Holroyd S."/>
            <person name="Jagels K."/>
            <person name="Keith K.E."/>
            <person name="Maddison M."/>
            <person name="Moule S."/>
            <person name="Price C."/>
            <person name="Quail M.A."/>
            <person name="Rabbinowitsch E."/>
            <person name="Rutherford K."/>
            <person name="Sanders M."/>
            <person name="Simmonds M."/>
            <person name="Songsivilai S."/>
            <person name="Stevens K."/>
            <person name="Tumapa S."/>
            <person name="Vesaratchavest M."/>
            <person name="Whitehead S."/>
            <person name="Yeats C."/>
            <person name="Barrell B.G."/>
            <person name="Oyston P.C.F."/>
            <person name="Parkhill J."/>
        </authorList>
    </citation>
    <scope>NUCLEOTIDE SEQUENCE [LARGE SCALE GENOMIC DNA]</scope>
    <source>
        <strain>K96243</strain>
    </source>
</reference>